<proteinExistence type="evidence at transcript level"/>
<feature type="chain" id="PRO_0000436507" description="Meiotic recombination protein W68">
    <location>
        <begin position="1"/>
        <end position="331"/>
    </location>
</feature>
<feature type="domain" description="Topo IIA-type catalytic" evidence="4">
    <location>
        <begin position="1"/>
        <end position="120"/>
    </location>
</feature>
<feature type="active site" description="O-(5'-phospho-DNA)-tyrosine intermediate" evidence="4">
    <location>
        <position position="81"/>
    </location>
</feature>
<feature type="binding site" evidence="2">
    <location>
        <position position="167"/>
    </location>
    <ligand>
        <name>Mg(2+)</name>
        <dbReference type="ChEBI" id="CHEBI:18420"/>
    </ligand>
</feature>
<feature type="binding site" evidence="2">
    <location>
        <position position="221"/>
    </location>
    <ligand>
        <name>Mg(2+)</name>
        <dbReference type="ChEBI" id="CHEBI:18420"/>
    </ligand>
</feature>
<sequence length="331" mass="37064">MDEFSENIERIALELLSNLVHGNATLSVPRNSSGNVISEYRRVSYNNRGSRHSFCVLIYMLSRVHRLQVRGGSFTVRGLYYDNPLLVRSQSRIAEARLDVCRMLRTSPLSLGILAASKGLVAGDLRLLMTNGDVLDSSLYGGPLTLPTDPEKIDRIETLAEFVLIVEKESVFESLLSRNVFGTFERRFILITGKGYPDCCTRRIVHRLTEENQLAAYILVDADPFGVEIMLVYRHGSKSMSFSSQGLTTPALRWIGLHPSEIPALGTGAVALVAGDNKKINDLLARHDLEPGVRQELRMLQDVQLKAEIESVIDFLTDDYIPNKINRNLFL</sequence>
<accession>Q7KPA5</accession>
<organism>
    <name type="scientific">Drosophila melanogaster</name>
    <name type="common">Fruit fly</name>
    <dbReference type="NCBI Taxonomy" id="7227"/>
    <lineage>
        <taxon>Eukaryota</taxon>
        <taxon>Metazoa</taxon>
        <taxon>Ecdysozoa</taxon>
        <taxon>Arthropoda</taxon>
        <taxon>Hexapoda</taxon>
        <taxon>Insecta</taxon>
        <taxon>Pterygota</taxon>
        <taxon>Neoptera</taxon>
        <taxon>Endopterygota</taxon>
        <taxon>Diptera</taxon>
        <taxon>Brachycera</taxon>
        <taxon>Muscomorpha</taxon>
        <taxon>Ephydroidea</taxon>
        <taxon>Drosophilidae</taxon>
        <taxon>Drosophila</taxon>
        <taxon>Sophophora</taxon>
    </lineage>
</organism>
<comment type="function">
    <text evidence="3 5">Required for meiotic recombination (PubMed:9744869). Together with mei-P22, mediates DNA cleavage that forms the double-strand breaks (DSB) that initiate meiotic recombination (By similarity).</text>
</comment>
<comment type="catalytic activity">
    <reaction evidence="4 7">
        <text>ATP-dependent breakage, passage and rejoining of double-stranded DNA.</text>
        <dbReference type="EC" id="5.6.2.2"/>
    </reaction>
</comment>
<comment type="cofactor">
    <cofactor evidence="2">
        <name>Mg(2+)</name>
        <dbReference type="ChEBI" id="CHEBI:18420"/>
    </cofactor>
</comment>
<comment type="subcellular location">
    <subcellularLocation>
        <location evidence="1">Nucleus</location>
    </subcellularLocation>
</comment>
<comment type="similarity">
    <text evidence="7">Belongs to the TOP6A family.</text>
</comment>
<reference key="1">
    <citation type="journal article" date="1998" name="Genes Dev.">
        <title>mei-W68 in Drosophila melanogaster encodes a Spo11 homolog: evidence that the mechanism for initiating meiotic recombination is conserved.</title>
        <authorList>
            <person name="McKim K.S."/>
            <person name="Hayashi-Hagihara A."/>
        </authorList>
    </citation>
    <scope>NUCLEOTIDE SEQUENCE [MRNA]</scope>
    <scope>FUNCTION</scope>
</reference>
<reference key="2">
    <citation type="journal article" date="2000" name="Science">
        <title>The genome sequence of Drosophila melanogaster.</title>
        <authorList>
            <person name="Adams M.D."/>
            <person name="Celniker S.E."/>
            <person name="Holt R.A."/>
            <person name="Evans C.A."/>
            <person name="Gocayne J.D."/>
            <person name="Amanatides P.G."/>
            <person name="Scherer S.E."/>
            <person name="Li P.W."/>
            <person name="Hoskins R.A."/>
            <person name="Galle R.F."/>
            <person name="George R.A."/>
            <person name="Lewis S.E."/>
            <person name="Richards S."/>
            <person name="Ashburner M."/>
            <person name="Henderson S.N."/>
            <person name="Sutton G.G."/>
            <person name="Wortman J.R."/>
            <person name="Yandell M.D."/>
            <person name="Zhang Q."/>
            <person name="Chen L.X."/>
            <person name="Brandon R.C."/>
            <person name="Rogers Y.-H.C."/>
            <person name="Blazej R.G."/>
            <person name="Champe M."/>
            <person name="Pfeiffer B.D."/>
            <person name="Wan K.H."/>
            <person name="Doyle C."/>
            <person name="Baxter E.G."/>
            <person name="Helt G."/>
            <person name="Nelson C.R."/>
            <person name="Miklos G.L.G."/>
            <person name="Abril J.F."/>
            <person name="Agbayani A."/>
            <person name="An H.-J."/>
            <person name="Andrews-Pfannkoch C."/>
            <person name="Baldwin D."/>
            <person name="Ballew R.M."/>
            <person name="Basu A."/>
            <person name="Baxendale J."/>
            <person name="Bayraktaroglu L."/>
            <person name="Beasley E.M."/>
            <person name="Beeson K.Y."/>
            <person name="Benos P.V."/>
            <person name="Berman B.P."/>
            <person name="Bhandari D."/>
            <person name="Bolshakov S."/>
            <person name="Borkova D."/>
            <person name="Botchan M.R."/>
            <person name="Bouck J."/>
            <person name="Brokstein P."/>
            <person name="Brottier P."/>
            <person name="Burtis K.C."/>
            <person name="Busam D.A."/>
            <person name="Butler H."/>
            <person name="Cadieu E."/>
            <person name="Center A."/>
            <person name="Chandra I."/>
            <person name="Cherry J.M."/>
            <person name="Cawley S."/>
            <person name="Dahlke C."/>
            <person name="Davenport L.B."/>
            <person name="Davies P."/>
            <person name="de Pablos B."/>
            <person name="Delcher A."/>
            <person name="Deng Z."/>
            <person name="Mays A.D."/>
            <person name="Dew I."/>
            <person name="Dietz S.M."/>
            <person name="Dodson K."/>
            <person name="Doup L.E."/>
            <person name="Downes M."/>
            <person name="Dugan-Rocha S."/>
            <person name="Dunkov B.C."/>
            <person name="Dunn P."/>
            <person name="Durbin K.J."/>
            <person name="Evangelista C.C."/>
            <person name="Ferraz C."/>
            <person name="Ferriera S."/>
            <person name="Fleischmann W."/>
            <person name="Fosler C."/>
            <person name="Gabrielian A.E."/>
            <person name="Garg N.S."/>
            <person name="Gelbart W.M."/>
            <person name="Glasser K."/>
            <person name="Glodek A."/>
            <person name="Gong F."/>
            <person name="Gorrell J.H."/>
            <person name="Gu Z."/>
            <person name="Guan P."/>
            <person name="Harris M."/>
            <person name="Harris N.L."/>
            <person name="Harvey D.A."/>
            <person name="Heiman T.J."/>
            <person name="Hernandez J.R."/>
            <person name="Houck J."/>
            <person name="Hostin D."/>
            <person name="Houston K.A."/>
            <person name="Howland T.J."/>
            <person name="Wei M.-H."/>
            <person name="Ibegwam C."/>
            <person name="Jalali M."/>
            <person name="Kalush F."/>
            <person name="Karpen G.H."/>
            <person name="Ke Z."/>
            <person name="Kennison J.A."/>
            <person name="Ketchum K.A."/>
            <person name="Kimmel B.E."/>
            <person name="Kodira C.D."/>
            <person name="Kraft C.L."/>
            <person name="Kravitz S."/>
            <person name="Kulp D."/>
            <person name="Lai Z."/>
            <person name="Lasko P."/>
            <person name="Lei Y."/>
            <person name="Levitsky A.A."/>
            <person name="Li J.H."/>
            <person name="Li Z."/>
            <person name="Liang Y."/>
            <person name="Lin X."/>
            <person name="Liu X."/>
            <person name="Mattei B."/>
            <person name="McIntosh T.C."/>
            <person name="McLeod M.P."/>
            <person name="McPherson D."/>
            <person name="Merkulov G."/>
            <person name="Milshina N.V."/>
            <person name="Mobarry C."/>
            <person name="Morris J."/>
            <person name="Moshrefi A."/>
            <person name="Mount S.M."/>
            <person name="Moy M."/>
            <person name="Murphy B."/>
            <person name="Murphy L."/>
            <person name="Muzny D.M."/>
            <person name="Nelson D.L."/>
            <person name="Nelson D.R."/>
            <person name="Nelson K.A."/>
            <person name="Nixon K."/>
            <person name="Nusskern D.R."/>
            <person name="Pacleb J.M."/>
            <person name="Palazzolo M."/>
            <person name="Pittman G.S."/>
            <person name="Pan S."/>
            <person name="Pollard J."/>
            <person name="Puri V."/>
            <person name="Reese M.G."/>
            <person name="Reinert K."/>
            <person name="Remington K."/>
            <person name="Saunders R.D.C."/>
            <person name="Scheeler F."/>
            <person name="Shen H."/>
            <person name="Shue B.C."/>
            <person name="Siden-Kiamos I."/>
            <person name="Simpson M."/>
            <person name="Skupski M.P."/>
            <person name="Smith T.J."/>
            <person name="Spier E."/>
            <person name="Spradling A.C."/>
            <person name="Stapleton M."/>
            <person name="Strong R."/>
            <person name="Sun E."/>
            <person name="Svirskas R."/>
            <person name="Tector C."/>
            <person name="Turner R."/>
            <person name="Venter E."/>
            <person name="Wang A.H."/>
            <person name="Wang X."/>
            <person name="Wang Z.-Y."/>
            <person name="Wassarman D.A."/>
            <person name="Weinstock G.M."/>
            <person name="Weissenbach J."/>
            <person name="Williams S.M."/>
            <person name="Woodage T."/>
            <person name="Worley K.C."/>
            <person name="Wu D."/>
            <person name="Yang S."/>
            <person name="Yao Q.A."/>
            <person name="Ye J."/>
            <person name="Yeh R.-F."/>
            <person name="Zaveri J.S."/>
            <person name="Zhan M."/>
            <person name="Zhang G."/>
            <person name="Zhao Q."/>
            <person name="Zheng L."/>
            <person name="Zheng X.H."/>
            <person name="Zhong F.N."/>
            <person name="Zhong W."/>
            <person name="Zhou X."/>
            <person name="Zhu S.C."/>
            <person name="Zhu X."/>
            <person name="Smith H.O."/>
            <person name="Gibbs R.A."/>
            <person name="Myers E.W."/>
            <person name="Rubin G.M."/>
            <person name="Venter J.C."/>
        </authorList>
    </citation>
    <scope>NUCLEOTIDE SEQUENCE [LARGE SCALE GENOMIC DNA]</scope>
    <source>
        <strain>Berkeley</strain>
    </source>
</reference>
<reference key="3">
    <citation type="journal article" date="2002" name="Genome Biol.">
        <title>Annotation of the Drosophila melanogaster euchromatic genome: a systematic review.</title>
        <authorList>
            <person name="Misra S."/>
            <person name="Crosby M.A."/>
            <person name="Mungall C.J."/>
            <person name="Matthews B.B."/>
            <person name="Campbell K.S."/>
            <person name="Hradecky P."/>
            <person name="Huang Y."/>
            <person name="Kaminker J.S."/>
            <person name="Millburn G.H."/>
            <person name="Prochnik S.E."/>
            <person name="Smith C.D."/>
            <person name="Tupy J.L."/>
            <person name="Whitfield E.J."/>
            <person name="Bayraktaroglu L."/>
            <person name="Berman B.P."/>
            <person name="Bettencourt B.R."/>
            <person name="Celniker S.E."/>
            <person name="de Grey A.D.N.J."/>
            <person name="Drysdale R.A."/>
            <person name="Harris N.L."/>
            <person name="Richter J."/>
            <person name="Russo S."/>
            <person name="Schroeder A.J."/>
            <person name="Shu S.Q."/>
            <person name="Stapleton M."/>
            <person name="Yamada C."/>
            <person name="Ashburner M."/>
            <person name="Gelbart W.M."/>
            <person name="Rubin G.M."/>
            <person name="Lewis S.E."/>
        </authorList>
    </citation>
    <scope>GENOME REANNOTATION</scope>
    <source>
        <strain>Berkeley</strain>
    </source>
</reference>
<reference key="4">
    <citation type="submission" date="2010-02" db="EMBL/GenBank/DDBJ databases">
        <authorList>
            <person name="Carlson J."/>
            <person name="Booth B."/>
            <person name="Frise E."/>
            <person name="Park S."/>
            <person name="Wan K."/>
            <person name="Yu C."/>
            <person name="Celniker S.E."/>
        </authorList>
    </citation>
    <scope>NUCLEOTIDE SEQUENCE [LARGE SCALE MRNA]</scope>
</reference>
<name>SPO11_DROME</name>
<protein>
    <recommendedName>
        <fullName evidence="6">Meiotic recombination protein W68</fullName>
        <ecNumber evidence="7">5.6.2.2</ecNumber>
    </recommendedName>
    <alternativeName>
        <fullName evidence="6">SPO11 protein homolog</fullName>
    </alternativeName>
</protein>
<keyword id="KW-0238">DNA-binding</keyword>
<keyword id="KW-0413">Isomerase</keyword>
<keyword id="KW-0460">Magnesium</keyword>
<keyword id="KW-0469">Meiosis</keyword>
<keyword id="KW-0479">Metal-binding</keyword>
<keyword id="KW-0539">Nucleus</keyword>
<keyword id="KW-1185">Reference proteome</keyword>
<keyword id="KW-0799">Topoisomerase</keyword>
<gene>
    <name evidence="6" type="primary">mei-W68</name>
    <name type="ORF">CG7753</name>
</gene>
<evidence type="ECO:0000250" key="1"/>
<evidence type="ECO:0000250" key="2">
    <source>
        <dbReference type="UniProtKB" id="Q57815"/>
    </source>
</evidence>
<evidence type="ECO:0000250" key="3">
    <source>
        <dbReference type="UniProtKB" id="Q9WTK8"/>
    </source>
</evidence>
<evidence type="ECO:0000255" key="4">
    <source>
        <dbReference type="PROSITE-ProRule" id="PRU01385"/>
    </source>
</evidence>
<evidence type="ECO:0000269" key="5">
    <source>
    </source>
</evidence>
<evidence type="ECO:0000303" key="6">
    <source>
    </source>
</evidence>
<evidence type="ECO:0000305" key="7"/>
<dbReference type="EC" id="5.6.2.2" evidence="7"/>
<dbReference type="EMBL" id="AF085276">
    <property type="protein sequence ID" value="AAC61735.1"/>
    <property type="molecule type" value="mRNA"/>
</dbReference>
<dbReference type="EMBL" id="AE013599">
    <property type="protein sequence ID" value="AAF57553.1"/>
    <property type="molecule type" value="Genomic_DNA"/>
</dbReference>
<dbReference type="EMBL" id="BT120379">
    <property type="protein sequence ID" value="ADD16459.1"/>
    <property type="molecule type" value="mRNA"/>
</dbReference>
<dbReference type="RefSeq" id="NP_995901.1">
    <property type="nucleotide sequence ID" value="NM_206179.3"/>
</dbReference>
<dbReference type="SMR" id="Q7KPA5"/>
<dbReference type="FunCoup" id="Q7KPA5">
    <property type="interactions" value="102"/>
</dbReference>
<dbReference type="STRING" id="7227.FBpp0085657"/>
<dbReference type="PaxDb" id="7227-FBpp0085657"/>
<dbReference type="DNASU" id="2768853"/>
<dbReference type="EnsemblMetazoa" id="FBtr0086461">
    <property type="protein sequence ID" value="FBpp0085657"/>
    <property type="gene ID" value="FBgn0002716"/>
</dbReference>
<dbReference type="GeneID" id="2768853"/>
<dbReference type="KEGG" id="dme:Dmel_CG7753"/>
<dbReference type="UCSC" id="CG7753-RA">
    <property type="organism name" value="d. melanogaster"/>
</dbReference>
<dbReference type="AGR" id="FB:FBgn0002716"/>
<dbReference type="CTD" id="2768853"/>
<dbReference type="FlyBase" id="FBgn0002716">
    <property type="gene designation" value="mei-W68"/>
</dbReference>
<dbReference type="VEuPathDB" id="VectorBase:FBgn0002716"/>
<dbReference type="eggNOG" id="KOG2795">
    <property type="taxonomic scope" value="Eukaryota"/>
</dbReference>
<dbReference type="GeneTree" id="ENSGT00390000001787"/>
<dbReference type="HOGENOM" id="CLU_037229_1_1_1"/>
<dbReference type="InParanoid" id="Q7KPA5"/>
<dbReference type="OMA" id="IETAGMF"/>
<dbReference type="OrthoDB" id="5377392at2759"/>
<dbReference type="PhylomeDB" id="Q7KPA5"/>
<dbReference type="BioGRID-ORCS" id="2768853">
    <property type="hits" value="0 hits in 1 CRISPR screen"/>
</dbReference>
<dbReference type="GenomeRNAi" id="2768853"/>
<dbReference type="PRO" id="PR:Q7KPA5"/>
<dbReference type="Proteomes" id="UP000000803">
    <property type="component" value="Chromosome 2R"/>
</dbReference>
<dbReference type="Bgee" id="FBgn0002716">
    <property type="expression patterns" value="Expressed in dorsal appendage forming follicle cell in ovary and 35 other cell types or tissues"/>
</dbReference>
<dbReference type="ExpressionAtlas" id="Q7KPA5">
    <property type="expression patterns" value="baseline and differential"/>
</dbReference>
<dbReference type="GO" id="GO:0000228">
    <property type="term" value="C:nuclear chromosome"/>
    <property type="evidence" value="ECO:0000318"/>
    <property type="project" value="GO_Central"/>
</dbReference>
<dbReference type="GO" id="GO:0005524">
    <property type="term" value="F:ATP binding"/>
    <property type="evidence" value="ECO:0007669"/>
    <property type="project" value="InterPro"/>
</dbReference>
<dbReference type="GO" id="GO:0003677">
    <property type="term" value="F:DNA binding"/>
    <property type="evidence" value="ECO:0000318"/>
    <property type="project" value="GO_Central"/>
</dbReference>
<dbReference type="GO" id="GO:0003918">
    <property type="term" value="F:DNA topoisomerase type II (double strand cut, ATP-hydrolyzing) activity"/>
    <property type="evidence" value="ECO:0007669"/>
    <property type="project" value="InterPro"/>
</dbReference>
<dbReference type="GO" id="GO:0046872">
    <property type="term" value="F:metal ion binding"/>
    <property type="evidence" value="ECO:0007669"/>
    <property type="project" value="UniProtKB-KW"/>
</dbReference>
<dbReference type="GO" id="GO:0006265">
    <property type="term" value="P:DNA topological change"/>
    <property type="evidence" value="ECO:0007669"/>
    <property type="project" value="InterPro"/>
</dbReference>
<dbReference type="GO" id="GO:0042139">
    <property type="term" value="P:early meiotic recombination nodule assembly"/>
    <property type="evidence" value="ECO:0000315"/>
    <property type="project" value="FlyBase"/>
</dbReference>
<dbReference type="GO" id="GO:0042140">
    <property type="term" value="P:late meiotic recombination nodule assembly"/>
    <property type="evidence" value="ECO:0000315"/>
    <property type="project" value="FlyBase"/>
</dbReference>
<dbReference type="GO" id="GO:0042138">
    <property type="term" value="P:meiotic DNA double-strand break formation"/>
    <property type="evidence" value="ECO:0000318"/>
    <property type="project" value="GO_Central"/>
</dbReference>
<dbReference type="GO" id="GO:0000706">
    <property type="term" value="P:meiotic DNA double-strand break processing"/>
    <property type="evidence" value="ECO:0000314"/>
    <property type="project" value="FlyBase"/>
</dbReference>
<dbReference type="GO" id="GO:0030717">
    <property type="term" value="P:oocyte karyosome formation"/>
    <property type="evidence" value="ECO:0000316"/>
    <property type="project" value="FlyBase"/>
</dbReference>
<dbReference type="GO" id="GO:0048477">
    <property type="term" value="P:oogenesis"/>
    <property type="evidence" value="ECO:0000316"/>
    <property type="project" value="FlyBase"/>
</dbReference>
<dbReference type="GO" id="GO:0007131">
    <property type="term" value="P:reciprocal meiotic recombination"/>
    <property type="evidence" value="ECO:0000315"/>
    <property type="project" value="FlyBase"/>
</dbReference>
<dbReference type="CDD" id="cd00223">
    <property type="entry name" value="TOPRIM_TopoIIB_SPO"/>
    <property type="match status" value="1"/>
</dbReference>
<dbReference type="Gene3D" id="3.40.1360.10">
    <property type="match status" value="1"/>
</dbReference>
<dbReference type="Gene3D" id="1.10.10.10">
    <property type="entry name" value="Winged helix-like DNA-binding domain superfamily/Winged helix DNA-binding domain"/>
    <property type="match status" value="1"/>
</dbReference>
<dbReference type="InterPro" id="IPR002815">
    <property type="entry name" value="Spo11/TopoVI_A"/>
</dbReference>
<dbReference type="InterPro" id="IPR013049">
    <property type="entry name" value="Spo11/TopoVI_A_N"/>
</dbReference>
<dbReference type="InterPro" id="IPR036078">
    <property type="entry name" value="Spo11/TopoVI_A_sf"/>
</dbReference>
<dbReference type="InterPro" id="IPR004085">
    <property type="entry name" value="TopoVI_A"/>
</dbReference>
<dbReference type="InterPro" id="IPR034136">
    <property type="entry name" value="TOPRIM_Topo6A/Spo11"/>
</dbReference>
<dbReference type="InterPro" id="IPR036388">
    <property type="entry name" value="WH-like_DNA-bd_sf"/>
</dbReference>
<dbReference type="PANTHER" id="PTHR10848">
    <property type="entry name" value="MEIOTIC RECOMBINATION PROTEIN SPO11"/>
    <property type="match status" value="1"/>
</dbReference>
<dbReference type="PANTHER" id="PTHR10848:SF0">
    <property type="entry name" value="MEIOTIC RECOMBINATION PROTEIN SPO11"/>
    <property type="match status" value="1"/>
</dbReference>
<dbReference type="Pfam" id="PF21180">
    <property type="entry name" value="TOP6A-Spo11_Toprim"/>
    <property type="match status" value="1"/>
</dbReference>
<dbReference type="Pfam" id="PF04406">
    <property type="entry name" value="TP6A_N"/>
    <property type="match status" value="1"/>
</dbReference>
<dbReference type="PRINTS" id="PR01550">
    <property type="entry name" value="TOP6AFAMILY"/>
</dbReference>
<dbReference type="PRINTS" id="PR01552">
    <property type="entry name" value="TPISMRASE6A"/>
</dbReference>
<dbReference type="SUPFAM" id="SSF56726">
    <property type="entry name" value="DNA topoisomerase IV, alpha subunit"/>
    <property type="match status" value="1"/>
</dbReference>
<dbReference type="PROSITE" id="PS52041">
    <property type="entry name" value="TOPO_IIB"/>
    <property type="match status" value="1"/>
</dbReference>